<name>FTSE_STRR6</name>
<comment type="function">
    <text evidence="1 3 4">Part of the ABC transporter FtsEX involved in cellular division (By similarity). Has ATPase activity (By similarity). Essential for cell division and viability (PubMed:32873757).</text>
</comment>
<comment type="catalytic activity">
    <reaction evidence="1">
        <text>ATP + H2O = ADP + phosphate + H(+)</text>
        <dbReference type="Rhea" id="RHEA:13065"/>
        <dbReference type="ChEBI" id="CHEBI:15377"/>
        <dbReference type="ChEBI" id="CHEBI:15378"/>
        <dbReference type="ChEBI" id="CHEBI:30616"/>
        <dbReference type="ChEBI" id="CHEBI:43474"/>
        <dbReference type="ChEBI" id="CHEBI:456216"/>
    </reaction>
</comment>
<comment type="subunit">
    <text evidence="3">Homodimer. Forms a membrane-associated complex with FtsX.</text>
</comment>
<comment type="subcellular location">
    <subcellularLocation>
        <location evidence="3">Cell membrane</location>
        <topology evidence="3">Peripheral membrane protein</topology>
        <orientation evidence="3">Cytoplasmic side</orientation>
    </subcellularLocation>
</comment>
<comment type="disruption phenotype">
    <text evidence="4">Depletion causes reduced growth and failure of cells to separate after division, forming chains.</text>
</comment>
<comment type="similarity">
    <text evidence="3">Belongs to the ABC transporter superfamily.</text>
</comment>
<proteinExistence type="evidence at protein level"/>
<gene>
    <name evidence="5" type="primary">ftsE</name>
    <name evidence="7" type="ordered locus">spr0666</name>
</gene>
<dbReference type="EMBL" id="AE007317">
    <property type="protein sequence ID" value="AAK99470.1"/>
    <property type="molecule type" value="Genomic_DNA"/>
</dbReference>
<dbReference type="PIR" id="B97955">
    <property type="entry name" value="B97955"/>
</dbReference>
<dbReference type="PIR" id="E95087">
    <property type="entry name" value="E95087"/>
</dbReference>
<dbReference type="RefSeq" id="NP_358260.1">
    <property type="nucleotide sequence ID" value="NC_003098.1"/>
</dbReference>
<dbReference type="RefSeq" id="WP_000022268.1">
    <property type="nucleotide sequence ID" value="NC_003098.1"/>
</dbReference>
<dbReference type="PDB" id="6Z4W">
    <property type="method" value="X-ray"/>
    <property type="resolution" value="1.36 A"/>
    <property type="chains" value="A=1-230"/>
</dbReference>
<dbReference type="PDB" id="6Z63">
    <property type="method" value="X-ray"/>
    <property type="resolution" value="1.57 A"/>
    <property type="chains" value="A/B/C=2-230"/>
</dbReference>
<dbReference type="PDB" id="6Z67">
    <property type="method" value="X-ray"/>
    <property type="resolution" value="2.40 A"/>
    <property type="chains" value="B/C/E=2-230"/>
</dbReference>
<dbReference type="PDBsum" id="6Z4W"/>
<dbReference type="PDBsum" id="6Z63"/>
<dbReference type="PDBsum" id="6Z67"/>
<dbReference type="SMR" id="Q8DQH4"/>
<dbReference type="STRING" id="171101.spr0666"/>
<dbReference type="KEGG" id="spr:spr0666"/>
<dbReference type="PATRIC" id="fig|171101.6.peg.738"/>
<dbReference type="eggNOG" id="COG2884">
    <property type="taxonomic scope" value="Bacteria"/>
</dbReference>
<dbReference type="HOGENOM" id="CLU_000604_1_22_9"/>
<dbReference type="Proteomes" id="UP000000586">
    <property type="component" value="Chromosome"/>
</dbReference>
<dbReference type="GO" id="GO:0005886">
    <property type="term" value="C:plasma membrane"/>
    <property type="evidence" value="ECO:0000318"/>
    <property type="project" value="GO_Central"/>
</dbReference>
<dbReference type="GO" id="GO:0005524">
    <property type="term" value="F:ATP binding"/>
    <property type="evidence" value="ECO:0007669"/>
    <property type="project" value="UniProtKB-KW"/>
</dbReference>
<dbReference type="GO" id="GO:0016887">
    <property type="term" value="F:ATP hydrolysis activity"/>
    <property type="evidence" value="ECO:0007669"/>
    <property type="project" value="InterPro"/>
</dbReference>
<dbReference type="GO" id="GO:0022857">
    <property type="term" value="F:transmembrane transporter activity"/>
    <property type="evidence" value="ECO:0000318"/>
    <property type="project" value="GO_Central"/>
</dbReference>
<dbReference type="GO" id="GO:0051301">
    <property type="term" value="P:cell division"/>
    <property type="evidence" value="ECO:0007669"/>
    <property type="project" value="UniProtKB-KW"/>
</dbReference>
<dbReference type="GO" id="GO:0055085">
    <property type="term" value="P:transmembrane transport"/>
    <property type="evidence" value="ECO:0000318"/>
    <property type="project" value="GO_Central"/>
</dbReference>
<dbReference type="FunFam" id="3.40.50.300:FF:000056">
    <property type="entry name" value="Cell division ATP-binding protein FtsE"/>
    <property type="match status" value="1"/>
</dbReference>
<dbReference type="Gene3D" id="3.40.50.300">
    <property type="entry name" value="P-loop containing nucleotide triphosphate hydrolases"/>
    <property type="match status" value="1"/>
</dbReference>
<dbReference type="InterPro" id="IPR003593">
    <property type="entry name" value="AAA+_ATPase"/>
</dbReference>
<dbReference type="InterPro" id="IPR003439">
    <property type="entry name" value="ABC_transporter-like_ATP-bd"/>
</dbReference>
<dbReference type="InterPro" id="IPR017871">
    <property type="entry name" value="ABC_transporter-like_CS"/>
</dbReference>
<dbReference type="InterPro" id="IPR015854">
    <property type="entry name" value="ABC_transpr_LolD-like"/>
</dbReference>
<dbReference type="InterPro" id="IPR005286">
    <property type="entry name" value="Cell_div_FtsE"/>
</dbReference>
<dbReference type="InterPro" id="IPR027417">
    <property type="entry name" value="P-loop_NTPase"/>
</dbReference>
<dbReference type="NCBIfam" id="TIGR02673">
    <property type="entry name" value="FtsE"/>
    <property type="match status" value="1"/>
</dbReference>
<dbReference type="PANTHER" id="PTHR24220:SF470">
    <property type="entry name" value="CELL DIVISION ATP-BINDING PROTEIN FTSE"/>
    <property type="match status" value="1"/>
</dbReference>
<dbReference type="PANTHER" id="PTHR24220">
    <property type="entry name" value="IMPORT ATP-BINDING PROTEIN"/>
    <property type="match status" value="1"/>
</dbReference>
<dbReference type="Pfam" id="PF00005">
    <property type="entry name" value="ABC_tran"/>
    <property type="match status" value="1"/>
</dbReference>
<dbReference type="SMART" id="SM00382">
    <property type="entry name" value="AAA"/>
    <property type="match status" value="1"/>
</dbReference>
<dbReference type="SUPFAM" id="SSF52540">
    <property type="entry name" value="P-loop containing nucleoside triphosphate hydrolases"/>
    <property type="match status" value="1"/>
</dbReference>
<dbReference type="PROSITE" id="PS00211">
    <property type="entry name" value="ABC_TRANSPORTER_1"/>
    <property type="match status" value="1"/>
</dbReference>
<dbReference type="PROSITE" id="PS50893">
    <property type="entry name" value="ABC_TRANSPORTER_2"/>
    <property type="match status" value="1"/>
</dbReference>
<organism evidence="8">
    <name type="scientific">Streptococcus pneumoniae (strain ATCC BAA-255 / R6)</name>
    <dbReference type="NCBI Taxonomy" id="171101"/>
    <lineage>
        <taxon>Bacteria</taxon>
        <taxon>Bacillati</taxon>
        <taxon>Bacillota</taxon>
        <taxon>Bacilli</taxon>
        <taxon>Lactobacillales</taxon>
        <taxon>Streptococcaceae</taxon>
        <taxon>Streptococcus</taxon>
    </lineage>
</organism>
<feature type="chain" id="PRO_0000459706" description="Cell division ATP-binding protein FtsE">
    <location>
        <begin position="1"/>
        <end position="230"/>
    </location>
</feature>
<feature type="domain" description="ABC transporter" evidence="2">
    <location>
        <begin position="4"/>
        <end position="229"/>
    </location>
</feature>
<feature type="binding site" evidence="2">
    <location>
        <begin position="37"/>
        <end position="44"/>
    </location>
    <ligand>
        <name>ATP</name>
        <dbReference type="ChEBI" id="CHEBI:30616"/>
    </ligand>
</feature>
<feature type="strand" evidence="12">
    <location>
        <begin position="3"/>
        <end position="12"/>
    </location>
</feature>
<feature type="strand" evidence="12">
    <location>
        <begin position="18"/>
        <end position="27"/>
    </location>
</feature>
<feature type="strand" evidence="12">
    <location>
        <begin position="32"/>
        <end position="36"/>
    </location>
</feature>
<feature type="helix" evidence="12">
    <location>
        <begin position="43"/>
        <end position="50"/>
    </location>
</feature>
<feature type="strand" evidence="12">
    <location>
        <begin position="57"/>
        <end position="63"/>
    </location>
</feature>
<feature type="turn" evidence="12">
    <location>
        <begin position="68"/>
        <end position="70"/>
    </location>
</feature>
<feature type="helix" evidence="12">
    <location>
        <begin position="73"/>
        <end position="75"/>
    </location>
</feature>
<feature type="helix" evidence="12">
    <location>
        <begin position="76"/>
        <end position="82"/>
    </location>
</feature>
<feature type="strand" evidence="12">
    <location>
        <begin position="83"/>
        <end position="86"/>
    </location>
</feature>
<feature type="helix" evidence="12">
    <location>
        <begin position="98"/>
        <end position="107"/>
    </location>
</feature>
<feature type="turn" evidence="12">
    <location>
        <begin position="108"/>
        <end position="110"/>
    </location>
</feature>
<feature type="helix" evidence="12">
    <location>
        <begin position="113"/>
        <end position="115"/>
    </location>
</feature>
<feature type="helix" evidence="12">
    <location>
        <begin position="116"/>
        <end position="127"/>
    </location>
</feature>
<feature type="helix" evidence="12">
    <location>
        <begin position="130"/>
        <end position="132"/>
    </location>
</feature>
<feature type="helix" evidence="12">
    <location>
        <begin position="137"/>
        <end position="139"/>
    </location>
</feature>
<feature type="helix" evidence="12">
    <location>
        <begin position="142"/>
        <end position="154"/>
    </location>
</feature>
<feature type="strand" evidence="12">
    <location>
        <begin position="159"/>
        <end position="165"/>
    </location>
</feature>
<feature type="turn" evidence="12">
    <location>
        <begin position="166"/>
        <end position="169"/>
    </location>
</feature>
<feature type="helix" evidence="12">
    <location>
        <begin position="172"/>
        <end position="187"/>
    </location>
</feature>
<feature type="strand" evidence="12">
    <location>
        <begin position="191"/>
        <end position="195"/>
    </location>
</feature>
<feature type="helix" evidence="12">
    <location>
        <begin position="199"/>
        <end position="204"/>
    </location>
</feature>
<feature type="strand" evidence="12">
    <location>
        <begin position="208"/>
        <end position="213"/>
    </location>
</feature>
<feature type="strand" evidence="12">
    <location>
        <begin position="216"/>
        <end position="221"/>
    </location>
</feature>
<protein>
    <recommendedName>
        <fullName evidence="6">Cell division ATP-binding protein FtsE</fullName>
    </recommendedName>
</protein>
<reference evidence="8" key="1">
    <citation type="journal article" date="2001" name="J. Bacteriol.">
        <title>Genome of the bacterium Streptococcus pneumoniae strain R6.</title>
        <authorList>
            <person name="Hoskins J."/>
            <person name="Alborn W.E. Jr."/>
            <person name="Arnold J."/>
            <person name="Blaszczak L.C."/>
            <person name="Burgett S."/>
            <person name="DeHoff B.S."/>
            <person name="Estrem S.T."/>
            <person name="Fritz L."/>
            <person name="Fu D.-J."/>
            <person name="Fuller W."/>
            <person name="Geringer C."/>
            <person name="Gilmour R."/>
            <person name="Glass J.S."/>
            <person name="Khoja H."/>
            <person name="Kraft A.R."/>
            <person name="Lagace R.E."/>
            <person name="LeBlanc D.J."/>
            <person name="Lee L.N."/>
            <person name="Lefkowitz E.J."/>
            <person name="Lu J."/>
            <person name="Matsushima P."/>
            <person name="McAhren S.M."/>
            <person name="McHenney M."/>
            <person name="McLeaster K."/>
            <person name="Mundy C.W."/>
            <person name="Nicas T.I."/>
            <person name="Norris F.H."/>
            <person name="O'Gara M."/>
            <person name="Peery R.B."/>
            <person name="Robertson G.T."/>
            <person name="Rockey P."/>
            <person name="Sun P.-M."/>
            <person name="Winkler M.E."/>
            <person name="Yang Y."/>
            <person name="Young-Bellido M."/>
            <person name="Zhao G."/>
            <person name="Zook C.A."/>
            <person name="Baltz R.H."/>
            <person name="Jaskunas S.R."/>
            <person name="Rosteck P.R. Jr."/>
            <person name="Skatrud P.L."/>
            <person name="Glass J.I."/>
        </authorList>
    </citation>
    <scope>NUCLEOTIDE SEQUENCE [LARGE SCALE GENOMIC DNA]</scope>
    <source>
        <strain evidence="8">ATCC BAA-255 / R6</strain>
    </source>
</reference>
<reference evidence="9 10 11" key="2">
    <citation type="journal article" date="2020" name="MBio">
        <title>Structural Characterization of the Essential Cell Division Protein FtsE and Its Interaction with FtsX in Streptococcus pneumoniae.</title>
        <authorList>
            <person name="Alcorlo M."/>
            <person name="Straume D."/>
            <person name="Lutkenhaus J."/>
            <person name="Havarstein L.S."/>
            <person name="Hermoso J.A."/>
        </authorList>
    </citation>
    <scope>X-RAY CRYSTALLOGRAPHY (1.36 ANGSTROMS)</scope>
    <scope>DISRUPTION PHENOTYPE</scope>
</reference>
<keyword id="KW-0002">3D-structure</keyword>
<keyword id="KW-0067">ATP-binding</keyword>
<keyword id="KW-0131">Cell cycle</keyword>
<keyword id="KW-0132">Cell division</keyword>
<keyword id="KW-1003">Cell membrane</keyword>
<keyword id="KW-0472">Membrane</keyword>
<keyword id="KW-0547">Nucleotide-binding</keyword>
<keyword id="KW-1185">Reference proteome</keyword>
<keyword id="KW-0813">Transport</keyword>
<accession>Q8DQH4</accession>
<sequence>MSIIEMRDVVKKYDNGTTALRGVSVSVQPGEFAYIVGPSGAGKSTFIRSLYREVKIDKGSLSVAGFNLVKIKKKDVPLLRRSVGVVFQDYKLLPKKTVYENIAYAMEVIGENRRNIKRRVMEVLDLVGLKHKVRSFPNELSGGEQQRIAIARAIVNNPKVLIADEPTGNLDPDNSWEIMNLLERINLQGTTILMATHNSQIVNTLRHRVIAIENGRVVRDESKGEYGYDD</sequence>
<evidence type="ECO:0000250" key="1">
    <source>
        <dbReference type="UniProtKB" id="A0A0H2ZM82"/>
    </source>
</evidence>
<evidence type="ECO:0000255" key="2">
    <source>
        <dbReference type="PROSITE-ProRule" id="PRU00434"/>
    </source>
</evidence>
<evidence type="ECO:0000255" key="3">
    <source>
        <dbReference type="RuleBase" id="RU365094"/>
    </source>
</evidence>
<evidence type="ECO:0000269" key="4">
    <source>
    </source>
</evidence>
<evidence type="ECO:0000303" key="5">
    <source>
    </source>
</evidence>
<evidence type="ECO:0000305" key="6">
    <source>
    </source>
</evidence>
<evidence type="ECO:0000312" key="7">
    <source>
        <dbReference type="EMBL" id="AAK99470.1"/>
    </source>
</evidence>
<evidence type="ECO:0000312" key="8">
    <source>
        <dbReference type="Proteomes" id="UP000000586"/>
    </source>
</evidence>
<evidence type="ECO:0007744" key="9">
    <source>
        <dbReference type="PDB" id="6Z4W"/>
    </source>
</evidence>
<evidence type="ECO:0007744" key="10">
    <source>
        <dbReference type="PDB" id="6Z63"/>
    </source>
</evidence>
<evidence type="ECO:0007744" key="11">
    <source>
        <dbReference type="PDB" id="6Z67"/>
    </source>
</evidence>
<evidence type="ECO:0007829" key="12">
    <source>
        <dbReference type="PDB" id="6Z4W"/>
    </source>
</evidence>